<comment type="function">
    <text evidence="4">Catalyzes the ATP-dependent biosynthesis of glutamine from glutamate and ammonia.</text>
</comment>
<comment type="catalytic activity">
    <reaction evidence="4">
        <text>L-glutamate + NH4(+) + ATP = L-glutamine + ADP + phosphate + H(+)</text>
        <dbReference type="Rhea" id="RHEA:16169"/>
        <dbReference type="ChEBI" id="CHEBI:15378"/>
        <dbReference type="ChEBI" id="CHEBI:28938"/>
        <dbReference type="ChEBI" id="CHEBI:29985"/>
        <dbReference type="ChEBI" id="CHEBI:30616"/>
        <dbReference type="ChEBI" id="CHEBI:43474"/>
        <dbReference type="ChEBI" id="CHEBI:58359"/>
        <dbReference type="ChEBI" id="CHEBI:456216"/>
        <dbReference type="EC" id="6.3.1.2"/>
    </reaction>
</comment>
<comment type="cofactor">
    <cofactor evidence="4">
        <name>Mg(2+)</name>
        <dbReference type="ChEBI" id="CHEBI:18420"/>
    </cofactor>
    <text evidence="4">Binds 2 Mg(2+) ions per subunit.</text>
</comment>
<comment type="activity regulation">
    <text evidence="4">The activity of this enzyme could be controlled by adenylation under conditions of abundant glutamine.</text>
</comment>
<comment type="subunit">
    <text evidence="4">Oligomer of 12 subunits arranged in the form of two hexagons.</text>
</comment>
<comment type="subcellular location">
    <subcellularLocation>
        <location evidence="4">Cytoplasm</location>
    </subcellularLocation>
</comment>
<comment type="miscellaneous">
    <text evidence="7">Two forms of glutamine synthetase (GSI and GSII) can be found in this bacteria, GSI is a typical prokaryotic glutamine synthetase whereas GSII is similar to the eukaryotic enzyme.</text>
</comment>
<comment type="similarity">
    <text evidence="4">Belongs to the glutamine synthetase family.</text>
</comment>
<organism>
    <name type="scientific">Streptomyces viridochromogenes</name>
    <dbReference type="NCBI Taxonomy" id="1938"/>
    <lineage>
        <taxon>Bacteria</taxon>
        <taxon>Bacillati</taxon>
        <taxon>Actinomycetota</taxon>
        <taxon>Actinomycetes</taxon>
        <taxon>Kitasatosporales</taxon>
        <taxon>Streptomycetaceae</taxon>
        <taxon>Streptomyces</taxon>
    </lineage>
</organism>
<protein>
    <recommendedName>
        <fullName evidence="4">Glutamine synthetase</fullName>
        <shortName evidence="4">GS</shortName>
        <ecNumber evidence="4">6.3.1.2</ecNumber>
    </recommendedName>
    <alternativeName>
        <fullName evidence="4">Glutamate--ammonia ligase</fullName>
    </alternativeName>
    <alternativeName>
        <fullName evidence="4">Glutamine synthetase I beta</fullName>
        <shortName evidence="4">GSI beta</shortName>
    </alternativeName>
</protein>
<keyword id="KW-0067">ATP-binding</keyword>
<keyword id="KW-0963">Cytoplasm</keyword>
<keyword id="KW-0436">Ligase</keyword>
<keyword id="KW-0460">Magnesium</keyword>
<keyword id="KW-0479">Metal-binding</keyword>
<keyword id="KW-0547">Nucleotide-binding</keyword>
<keyword id="KW-0597">Phosphoprotein</keyword>
<proteinExistence type="inferred from homology"/>
<feature type="chain" id="PRO_0000153269" description="Glutamine synthetase">
    <location>
        <begin position="1"/>
        <end position="469"/>
    </location>
</feature>
<feature type="domain" description="GS beta-grasp" evidence="5">
    <location>
        <begin position="15"/>
        <end position="96"/>
    </location>
</feature>
<feature type="domain" description="GS catalytic" evidence="6">
    <location>
        <begin position="104"/>
        <end position="469"/>
    </location>
</feature>
<feature type="binding site" evidence="4">
    <location>
        <position position="129"/>
    </location>
    <ligand>
        <name>Mg(2+)</name>
        <dbReference type="ChEBI" id="CHEBI:18420"/>
        <label>1</label>
    </ligand>
</feature>
<feature type="binding site" evidence="4">
    <location>
        <position position="131"/>
    </location>
    <ligand>
        <name>Mg(2+)</name>
        <dbReference type="ChEBI" id="CHEBI:18420"/>
        <label>2</label>
    </ligand>
</feature>
<feature type="binding site" evidence="4">
    <location>
        <position position="205"/>
    </location>
    <ligand>
        <name>ATP</name>
        <dbReference type="ChEBI" id="CHEBI:30616"/>
    </ligand>
</feature>
<feature type="binding site" evidence="4">
    <location>
        <position position="210"/>
    </location>
    <ligand>
        <name>Mg(2+)</name>
        <dbReference type="ChEBI" id="CHEBI:18420"/>
        <label>2</label>
    </ligand>
</feature>
<feature type="binding site" evidence="4">
    <location>
        <position position="218"/>
    </location>
    <ligand>
        <name>Mg(2+)</name>
        <dbReference type="ChEBI" id="CHEBI:18420"/>
        <label>2</label>
    </ligand>
</feature>
<feature type="binding site" evidence="4">
    <location>
        <begin position="221"/>
        <end position="223"/>
    </location>
    <ligand>
        <name>ATP</name>
        <dbReference type="ChEBI" id="CHEBI:30616"/>
    </ligand>
</feature>
<feature type="binding site" evidence="4">
    <location>
        <begin position="262"/>
        <end position="263"/>
    </location>
    <ligand>
        <name>L-glutamate</name>
        <dbReference type="ChEBI" id="CHEBI:29985"/>
    </ligand>
</feature>
<feature type="binding site" evidence="2">
    <location>
        <position position="263"/>
    </location>
    <ligand>
        <name>L-glutamate</name>
        <dbReference type="ChEBI" id="CHEBI:29985"/>
    </ligand>
</feature>
<feature type="binding site" evidence="4">
    <location>
        <position position="267"/>
    </location>
    <ligand>
        <name>Mg(2+)</name>
        <dbReference type="ChEBI" id="CHEBI:18420"/>
        <label>1</label>
    </ligand>
</feature>
<feature type="binding site" evidence="4">
    <location>
        <begin position="269"/>
        <end position="271"/>
    </location>
    <ligand>
        <name>ATP</name>
        <dbReference type="ChEBI" id="CHEBI:30616"/>
    </ligand>
</feature>
<feature type="binding site" evidence="3">
    <location>
        <position position="271"/>
    </location>
    <ligand>
        <name>ATP</name>
        <dbReference type="ChEBI" id="CHEBI:30616"/>
    </ligand>
</feature>
<feature type="binding site" evidence="4">
    <location>
        <position position="320"/>
    </location>
    <ligand>
        <name>L-glutamate</name>
        <dbReference type="ChEBI" id="CHEBI:29985"/>
    </ligand>
</feature>
<feature type="binding site" evidence="1">
    <location>
        <position position="326"/>
    </location>
    <ligand>
        <name>L-glutamate</name>
        <dbReference type="ChEBI" id="CHEBI:29985"/>
    </ligand>
</feature>
<feature type="binding site" evidence="4">
    <location>
        <position position="338"/>
    </location>
    <ligand>
        <name>ATP</name>
        <dbReference type="ChEBI" id="CHEBI:30616"/>
    </ligand>
</feature>
<feature type="binding site" evidence="4">
    <location>
        <position position="338"/>
    </location>
    <ligand>
        <name>L-glutamate</name>
        <dbReference type="ChEBI" id="CHEBI:29985"/>
    </ligand>
</feature>
<feature type="binding site" evidence="4">
    <location>
        <position position="343"/>
    </location>
    <ligand>
        <name>ATP</name>
        <dbReference type="ChEBI" id="CHEBI:30616"/>
    </ligand>
</feature>
<feature type="binding site" evidence="3">
    <location>
        <position position="352"/>
    </location>
    <ligand>
        <name>ATP</name>
        <dbReference type="ChEBI" id="CHEBI:30616"/>
    </ligand>
</feature>
<feature type="binding site" evidence="4">
    <location>
        <position position="357"/>
    </location>
    <ligand>
        <name>Mg(2+)</name>
        <dbReference type="ChEBI" id="CHEBI:18420"/>
        <label>1</label>
    </ligand>
</feature>
<feature type="binding site" evidence="4">
    <location>
        <position position="359"/>
    </location>
    <ligand>
        <name>L-glutamate</name>
        <dbReference type="ChEBI" id="CHEBI:29985"/>
    </ligand>
</feature>
<feature type="modified residue" description="O-AMP-tyrosine" evidence="4">
    <location>
        <position position="397"/>
    </location>
</feature>
<sequence>MFQNADEAKKLIADEDVKFIDVRFCDLPGVMQHFTIPASAFDPAEELAFDGSSIRGFQAIHESDMAVRADLSTARVDPFRRDKTVNINFFIHDPITGEQYSRDPRNVAKKAEAYLASTGIGDTGYFGPEAEFYVFDSVRLANSATESFYHIDSEAGAWNTGALENNRGYKVRYKGGYFPVPPVDHFADLRAQISLELDRAGLQVERHDHEVGTAGQAEINYKFNTLLAAADDLQLFKYIVKNVAWQNGKTATFMPKPIFGDNGSGMHVHQSLWTGGQALFYDEAGYAGLSDTARYYMGGILKHAPSLLAFTNPTVNSYHRLVPGFEAPVNLVYSQRNRSAAMRIPITGSNPKAKRVEFRAPDSSGNPYLAFSALLLAGLDGIKNKIEPAEPIDKDLYELAPEEHAGVPQVPTSLPAVLDRLEADHEFLLAGDVFTPDLIETWIDYKRTNEIAPLQLRPHPYEYEQYYDV</sequence>
<name>GLN1B_STRVR</name>
<dbReference type="EC" id="6.3.1.2" evidence="4"/>
<dbReference type="EMBL" id="X70924">
    <property type="protein sequence ID" value="CAA50272.1"/>
    <property type="molecule type" value="Genomic_DNA"/>
</dbReference>
<dbReference type="PIR" id="S32024">
    <property type="entry name" value="S32024"/>
</dbReference>
<dbReference type="SMR" id="Q05542"/>
<dbReference type="GO" id="GO:0005737">
    <property type="term" value="C:cytoplasm"/>
    <property type="evidence" value="ECO:0007669"/>
    <property type="project" value="UniProtKB-SubCell"/>
</dbReference>
<dbReference type="GO" id="GO:0016020">
    <property type="term" value="C:membrane"/>
    <property type="evidence" value="ECO:0007669"/>
    <property type="project" value="TreeGrafter"/>
</dbReference>
<dbReference type="GO" id="GO:0005524">
    <property type="term" value="F:ATP binding"/>
    <property type="evidence" value="ECO:0007669"/>
    <property type="project" value="UniProtKB-KW"/>
</dbReference>
<dbReference type="GO" id="GO:0004356">
    <property type="term" value="F:glutamine synthetase activity"/>
    <property type="evidence" value="ECO:0007669"/>
    <property type="project" value="UniProtKB-EC"/>
</dbReference>
<dbReference type="GO" id="GO:0046872">
    <property type="term" value="F:metal ion binding"/>
    <property type="evidence" value="ECO:0007669"/>
    <property type="project" value="UniProtKB-KW"/>
</dbReference>
<dbReference type="GO" id="GO:0006542">
    <property type="term" value="P:glutamine biosynthetic process"/>
    <property type="evidence" value="ECO:0007669"/>
    <property type="project" value="InterPro"/>
</dbReference>
<dbReference type="GO" id="GO:0019740">
    <property type="term" value="P:nitrogen utilization"/>
    <property type="evidence" value="ECO:0007669"/>
    <property type="project" value="TreeGrafter"/>
</dbReference>
<dbReference type="FunFam" id="3.10.20.70:FF:000006">
    <property type="entry name" value="Glutamine synthetase"/>
    <property type="match status" value="1"/>
</dbReference>
<dbReference type="FunFam" id="3.30.590.10:FF:000001">
    <property type="entry name" value="Glutamine synthetase"/>
    <property type="match status" value="1"/>
</dbReference>
<dbReference type="Gene3D" id="3.10.20.70">
    <property type="entry name" value="Glutamine synthetase, N-terminal domain"/>
    <property type="match status" value="1"/>
</dbReference>
<dbReference type="Gene3D" id="3.30.590.10">
    <property type="entry name" value="Glutamine synthetase/guanido kinase, catalytic domain"/>
    <property type="match status" value="1"/>
</dbReference>
<dbReference type="InterPro" id="IPR008147">
    <property type="entry name" value="Gln_synt_N"/>
</dbReference>
<dbReference type="InterPro" id="IPR036651">
    <property type="entry name" value="Gln_synt_N_sf"/>
</dbReference>
<dbReference type="InterPro" id="IPR014746">
    <property type="entry name" value="Gln_synth/guanido_kin_cat_dom"/>
</dbReference>
<dbReference type="InterPro" id="IPR008146">
    <property type="entry name" value="Gln_synth_cat_dom"/>
</dbReference>
<dbReference type="InterPro" id="IPR027303">
    <property type="entry name" value="Gln_synth_gly_rich_site"/>
</dbReference>
<dbReference type="InterPro" id="IPR004809">
    <property type="entry name" value="Gln_synth_I"/>
</dbReference>
<dbReference type="InterPro" id="IPR001637">
    <property type="entry name" value="Gln_synth_I_adenylation_site"/>
</dbReference>
<dbReference type="InterPro" id="IPR027302">
    <property type="entry name" value="Gln_synth_N_conserv_site"/>
</dbReference>
<dbReference type="NCBIfam" id="TIGR00653">
    <property type="entry name" value="GlnA"/>
    <property type="match status" value="1"/>
</dbReference>
<dbReference type="PANTHER" id="PTHR43407">
    <property type="entry name" value="GLUTAMINE SYNTHETASE"/>
    <property type="match status" value="1"/>
</dbReference>
<dbReference type="PANTHER" id="PTHR43407:SF1">
    <property type="entry name" value="LENGSIN"/>
    <property type="match status" value="1"/>
</dbReference>
<dbReference type="Pfam" id="PF00120">
    <property type="entry name" value="Gln-synt_C"/>
    <property type="match status" value="1"/>
</dbReference>
<dbReference type="Pfam" id="PF03951">
    <property type="entry name" value="Gln-synt_N"/>
    <property type="match status" value="1"/>
</dbReference>
<dbReference type="SMART" id="SM01230">
    <property type="entry name" value="Gln-synt_C"/>
    <property type="match status" value="1"/>
</dbReference>
<dbReference type="SUPFAM" id="SSF54368">
    <property type="entry name" value="Glutamine synthetase, N-terminal domain"/>
    <property type="match status" value="1"/>
</dbReference>
<dbReference type="SUPFAM" id="SSF55931">
    <property type="entry name" value="Glutamine synthetase/guanido kinase"/>
    <property type="match status" value="1"/>
</dbReference>
<dbReference type="PROSITE" id="PS00180">
    <property type="entry name" value="GLNA_1"/>
    <property type="match status" value="1"/>
</dbReference>
<dbReference type="PROSITE" id="PS00182">
    <property type="entry name" value="GLNA_ADENYLATION"/>
    <property type="match status" value="1"/>
</dbReference>
<dbReference type="PROSITE" id="PS00181">
    <property type="entry name" value="GLNA_ATP"/>
    <property type="match status" value="1"/>
</dbReference>
<dbReference type="PROSITE" id="PS51986">
    <property type="entry name" value="GS_BETA_GRASP"/>
    <property type="match status" value="1"/>
</dbReference>
<dbReference type="PROSITE" id="PS51987">
    <property type="entry name" value="GS_CATALYTIC"/>
    <property type="match status" value="1"/>
</dbReference>
<evidence type="ECO:0000250" key="1">
    <source>
        <dbReference type="UniProtKB" id="P0A1P6"/>
    </source>
</evidence>
<evidence type="ECO:0000250" key="2">
    <source>
        <dbReference type="UniProtKB" id="P12425"/>
    </source>
</evidence>
<evidence type="ECO:0000250" key="3">
    <source>
        <dbReference type="UniProtKB" id="P77961"/>
    </source>
</evidence>
<evidence type="ECO:0000250" key="4">
    <source>
        <dbReference type="UniProtKB" id="P9WN39"/>
    </source>
</evidence>
<evidence type="ECO:0000255" key="5">
    <source>
        <dbReference type="PROSITE-ProRule" id="PRU01330"/>
    </source>
</evidence>
<evidence type="ECO:0000255" key="6">
    <source>
        <dbReference type="PROSITE-ProRule" id="PRU01331"/>
    </source>
</evidence>
<evidence type="ECO:0000305" key="7"/>
<gene>
    <name evidence="4" type="primary">glnA</name>
    <name type="synonym">glnI</name>
</gene>
<reference key="1">
    <citation type="journal article" date="1993" name="Proc. Natl. Acad. Sci. U.S.A.">
        <title>Evolution of the glutamine synthetase gene, one of the oldest existing and functioning genes.</title>
        <authorList>
            <person name="Kumada Y."/>
            <person name="Benson D.R."/>
            <person name="Hillemann D."/>
            <person name="Hosted T.J."/>
            <person name="Rocheford D.A."/>
            <person name="Thompson C.J."/>
            <person name="Wohlleben W."/>
            <person name="Tateno Y."/>
        </authorList>
    </citation>
    <scope>NUCLEOTIDE SEQUENCE [GENOMIC DNA]</scope>
</reference>
<accession>Q05542</accession>